<keyword id="KW-0975">Bacterial flagellum</keyword>
<keyword id="KW-1185">Reference proteome</keyword>
<sequence>MLDKLDAALRFQQEALNLRAQRQEVLAANIANADTPGYQARDIDFASELKKVMQRGRDATSVVALTMTSTQHIPAQALTPPTAELQYRIPDQPSLDGNTVDMDRERTQFADNSLQYQMSLSALSGQIKGMMNVLQSGN</sequence>
<reference key="1">
    <citation type="journal article" date="1997" name="Science">
        <title>The complete genome sequence of Escherichia coli K-12.</title>
        <authorList>
            <person name="Blattner F.R."/>
            <person name="Plunkett G. III"/>
            <person name="Bloch C.A."/>
            <person name="Perna N.T."/>
            <person name="Burland V."/>
            <person name="Riley M."/>
            <person name="Collado-Vides J."/>
            <person name="Glasner J.D."/>
            <person name="Rode C.K."/>
            <person name="Mayhew G.F."/>
            <person name="Gregor J."/>
            <person name="Davis N.W."/>
            <person name="Kirkpatrick H.A."/>
            <person name="Goeden M.A."/>
            <person name="Rose D.J."/>
            <person name="Mau B."/>
            <person name="Shao Y."/>
        </authorList>
    </citation>
    <scope>NUCLEOTIDE SEQUENCE [LARGE SCALE GENOMIC DNA]</scope>
    <source>
        <strain>K12 / MG1655 / ATCC 47076</strain>
    </source>
</reference>
<reference key="2">
    <citation type="journal article" date="1996" name="DNA Res.">
        <title>A 718-kb DNA sequence of the Escherichia coli K-12 genome corresponding to the 12.7-28.0 min region on the linkage map.</title>
        <authorList>
            <person name="Oshima T."/>
            <person name="Aiba H."/>
            <person name="Baba T."/>
            <person name="Fujita K."/>
            <person name="Hayashi K."/>
            <person name="Honjo A."/>
            <person name="Ikemoto K."/>
            <person name="Inada T."/>
            <person name="Itoh T."/>
            <person name="Kajihara M."/>
            <person name="Kanai K."/>
            <person name="Kashimoto K."/>
            <person name="Kimura S."/>
            <person name="Kitagawa M."/>
            <person name="Makino K."/>
            <person name="Masuda S."/>
            <person name="Miki T."/>
            <person name="Mizobuchi K."/>
            <person name="Mori H."/>
            <person name="Motomura K."/>
            <person name="Nakamura Y."/>
            <person name="Nashimoto H."/>
            <person name="Nishio Y."/>
            <person name="Saito N."/>
            <person name="Sampei G."/>
            <person name="Seki Y."/>
            <person name="Tagami H."/>
            <person name="Takemoto K."/>
            <person name="Wada C."/>
            <person name="Yamamoto Y."/>
            <person name="Yano M."/>
            <person name="Horiuchi T."/>
        </authorList>
    </citation>
    <scope>NUCLEOTIDE SEQUENCE [LARGE SCALE GENOMIC DNA]</scope>
    <source>
        <strain>K12 / W3110 / ATCC 27325 / DSM 5911</strain>
    </source>
</reference>
<reference key="3">
    <citation type="journal article" date="2006" name="Mol. Syst. Biol.">
        <title>Highly accurate genome sequences of Escherichia coli K-12 strains MG1655 and W3110.</title>
        <authorList>
            <person name="Hayashi K."/>
            <person name="Morooka N."/>
            <person name="Yamamoto Y."/>
            <person name="Fujita K."/>
            <person name="Isono K."/>
            <person name="Choi S."/>
            <person name="Ohtsubo E."/>
            <person name="Baba T."/>
            <person name="Wanner B.L."/>
            <person name="Mori H."/>
            <person name="Horiuchi T."/>
        </authorList>
    </citation>
    <scope>NUCLEOTIDE SEQUENCE [LARGE SCALE GENOMIC DNA]</scope>
    <source>
        <strain>K12 / W3110 / ATCC 27325 / DSM 5911</strain>
    </source>
</reference>
<reference key="4">
    <citation type="journal article" date="2007" name="J. Bacteriol.">
        <title>Genome-wide screening of genes required for swarming motility in Escherichia coli K-12.</title>
        <authorList>
            <person name="Inoue T."/>
            <person name="Shingaki R."/>
            <person name="Hirose S."/>
            <person name="Waki K."/>
            <person name="Mori H."/>
            <person name="Fukui K."/>
        </authorList>
    </citation>
    <scope>DISRUPTION PHENOTYPE</scope>
    <source>
        <strain>K12 / BW25113</strain>
    </source>
</reference>
<organism>
    <name type="scientific">Escherichia coli (strain K12)</name>
    <dbReference type="NCBI Taxonomy" id="83333"/>
    <lineage>
        <taxon>Bacteria</taxon>
        <taxon>Pseudomonadati</taxon>
        <taxon>Pseudomonadota</taxon>
        <taxon>Gammaproteobacteria</taxon>
        <taxon>Enterobacterales</taxon>
        <taxon>Enterobacteriaceae</taxon>
        <taxon>Escherichia</taxon>
    </lineage>
</organism>
<name>FLGB_ECOLI</name>
<comment type="function">
    <text evidence="1">Structural component of flagellum, the bacterial motility apparatus. Part of the rod structure of flagellar basal body (By similarity).</text>
</comment>
<comment type="subunit">
    <text evidence="1">The basal body constitutes a major portion of the flagellar organelle and consists of a number of rings mounted on a central rod. In Gram-negative bacteria, at least four rings, L, P, S and M are present, whereas Gram-positive bacteria lack the L and P rings. The rod consists of about 26 subunits of FlgG in the distal portion, and FlgB, FlgC and FlgF build up the proximal portion of the rod with about 6 subunits each. Rod assembly occurs by export via the flagellum-specific pathway of its constituent proteins and by their incorporation into the rod structure in the probable order of FlgB, FlgC, FlgF and FlgG. Another protein, FliE, also assembles onto the stable rod structure (By similarity).</text>
</comment>
<comment type="subcellular location">
    <subcellularLocation>
        <location evidence="1">Bacterial flagellum basal body</location>
    </subcellularLocation>
</comment>
<comment type="disruption phenotype">
    <text evidence="2">Strongly repressed swarming and swimming.</text>
</comment>
<comment type="similarity">
    <text evidence="3">Belongs to the flagella basal body rod proteins family.</text>
</comment>
<accession>P0ABW9</accession>
<accession>P75934</accession>
<feature type="chain" id="PRO_0000180790" description="Flagellar basal body rod protein FlgB">
    <location>
        <begin position="1"/>
        <end position="138"/>
    </location>
</feature>
<gene>
    <name type="primary">flgB</name>
    <name type="synonym">fla FII</name>
    <name type="synonym">flbA</name>
    <name type="ordered locus">b1073</name>
    <name type="ordered locus">JW1060</name>
</gene>
<protein>
    <recommendedName>
        <fullName>Flagellar basal body rod protein FlgB</fullName>
    </recommendedName>
    <alternativeName>
        <fullName>Putative proximal rod protein</fullName>
    </alternativeName>
</protein>
<dbReference type="EMBL" id="U00096">
    <property type="protein sequence ID" value="AAC74157.1"/>
    <property type="molecule type" value="Genomic_DNA"/>
</dbReference>
<dbReference type="EMBL" id="AP009048">
    <property type="protein sequence ID" value="BAA35881.1"/>
    <property type="molecule type" value="Genomic_DNA"/>
</dbReference>
<dbReference type="PIR" id="F64850">
    <property type="entry name" value="F64850"/>
</dbReference>
<dbReference type="RefSeq" id="NP_415591.1">
    <property type="nucleotide sequence ID" value="NC_000913.3"/>
</dbReference>
<dbReference type="RefSeq" id="WP_000884702.1">
    <property type="nucleotide sequence ID" value="NZ_STEB01000016.1"/>
</dbReference>
<dbReference type="SMR" id="P0ABW9"/>
<dbReference type="BioGRID" id="4261281">
    <property type="interactions" value="20"/>
</dbReference>
<dbReference type="ComplexPortal" id="CPX-5887">
    <property type="entry name" value="Flagellar basal-body rod complex"/>
</dbReference>
<dbReference type="FunCoup" id="P0ABW9">
    <property type="interactions" value="84"/>
</dbReference>
<dbReference type="IntAct" id="P0ABW9">
    <property type="interactions" value="6"/>
</dbReference>
<dbReference type="STRING" id="511145.b1073"/>
<dbReference type="PaxDb" id="511145-b1073"/>
<dbReference type="EnsemblBacteria" id="AAC74157">
    <property type="protein sequence ID" value="AAC74157"/>
    <property type="gene ID" value="b1073"/>
</dbReference>
<dbReference type="GeneID" id="93776334"/>
<dbReference type="GeneID" id="945678"/>
<dbReference type="KEGG" id="ecj:JW1060"/>
<dbReference type="KEGG" id="eco:b1073"/>
<dbReference type="KEGG" id="ecoc:C3026_06510"/>
<dbReference type="PATRIC" id="fig|1411691.4.peg.1195"/>
<dbReference type="EchoBASE" id="EB4014"/>
<dbReference type="eggNOG" id="COG1815">
    <property type="taxonomic scope" value="Bacteria"/>
</dbReference>
<dbReference type="HOGENOM" id="CLU_125463_1_0_6"/>
<dbReference type="InParanoid" id="P0ABW9"/>
<dbReference type="OMA" id="DGHMARN"/>
<dbReference type="OrthoDB" id="9788334at2"/>
<dbReference type="PhylomeDB" id="P0ABW9"/>
<dbReference type="BioCyc" id="EcoCyc:FLGB-FLAGELLAR-MOTOR-ROD-PROTEIN"/>
<dbReference type="PRO" id="PR:P0ABW9"/>
<dbReference type="Proteomes" id="UP000000625">
    <property type="component" value="Chromosome"/>
</dbReference>
<dbReference type="GO" id="GO:0009288">
    <property type="term" value="C:bacterial-type flagellum"/>
    <property type="evidence" value="ECO:0000315"/>
    <property type="project" value="EcoCyc"/>
</dbReference>
<dbReference type="GO" id="GO:0030694">
    <property type="term" value="C:bacterial-type flagellum basal body, rod"/>
    <property type="evidence" value="ECO:0000304"/>
    <property type="project" value="EcoCyc"/>
</dbReference>
<dbReference type="GO" id="GO:0071973">
    <property type="term" value="P:bacterial-type flagellum-dependent cell motility"/>
    <property type="evidence" value="ECO:0000303"/>
    <property type="project" value="ComplexPortal"/>
</dbReference>
<dbReference type="GO" id="GO:0006935">
    <property type="term" value="P:chemotaxis"/>
    <property type="evidence" value="ECO:0000303"/>
    <property type="project" value="ComplexPortal"/>
</dbReference>
<dbReference type="InterPro" id="IPR001444">
    <property type="entry name" value="Flag_bb_rod_N"/>
</dbReference>
<dbReference type="InterPro" id="IPR019776">
    <property type="entry name" value="Flagellar_basal_body_rod_CS"/>
</dbReference>
<dbReference type="InterPro" id="IPR006300">
    <property type="entry name" value="FlgB"/>
</dbReference>
<dbReference type="NCBIfam" id="TIGR01396">
    <property type="entry name" value="FlgB"/>
    <property type="match status" value="1"/>
</dbReference>
<dbReference type="PANTHER" id="PTHR30435:SF12">
    <property type="entry name" value="FLAGELLAR BASAL BODY ROD PROTEIN FLGB"/>
    <property type="match status" value="1"/>
</dbReference>
<dbReference type="PANTHER" id="PTHR30435">
    <property type="entry name" value="FLAGELLAR PROTEIN"/>
    <property type="match status" value="1"/>
</dbReference>
<dbReference type="Pfam" id="PF00460">
    <property type="entry name" value="Flg_bb_rod"/>
    <property type="match status" value="1"/>
</dbReference>
<dbReference type="PIRSF" id="PIRSF002889">
    <property type="entry name" value="Rod_FlgB"/>
    <property type="match status" value="1"/>
</dbReference>
<dbReference type="PROSITE" id="PS00588">
    <property type="entry name" value="FLAGELLA_BB_ROD"/>
    <property type="match status" value="1"/>
</dbReference>
<proteinExistence type="inferred from homology"/>
<evidence type="ECO:0000250" key="1"/>
<evidence type="ECO:0000269" key="2">
    <source>
    </source>
</evidence>
<evidence type="ECO:0000305" key="3"/>